<protein>
    <recommendedName>
        <fullName evidence="3">Myrmicitoxin(1)-Pm1a</fullName>
        <shortName evidence="3">MYRTX(1)-Pm1a</shortName>
    </recommendedName>
</protein>
<dbReference type="EMBL" id="OR128458">
    <property type="protein sequence ID" value="WMI02496.1"/>
    <property type="molecule type" value="mRNA"/>
</dbReference>
<dbReference type="GO" id="GO:0005576">
    <property type="term" value="C:extracellular region"/>
    <property type="evidence" value="ECO:0007669"/>
    <property type="project" value="UniProtKB-SubCell"/>
</dbReference>
<dbReference type="GO" id="GO:0017080">
    <property type="term" value="F:sodium channel regulator activity"/>
    <property type="evidence" value="ECO:0007669"/>
    <property type="project" value="UniProtKB-KW"/>
</dbReference>
<dbReference type="GO" id="GO:0090729">
    <property type="term" value="F:toxin activity"/>
    <property type="evidence" value="ECO:0007669"/>
    <property type="project" value="UniProtKB-KW"/>
</dbReference>
<name>TX1A_POGMA</name>
<keyword id="KW-0027">Amidation</keyword>
<keyword id="KW-0872">Ion channel impairing toxin</keyword>
<keyword id="KW-0528">Neurotoxin</keyword>
<keyword id="KW-0964">Secreted</keyword>
<keyword id="KW-0732">Signal</keyword>
<keyword id="KW-0800">Toxin</keyword>
<keyword id="KW-0738">Voltage-gated sodium channel impairing toxin</keyword>
<accession>P0DRD0</accession>
<sequence>MEIPKLLYIAVIAIGLSGSLTCATPLADPEAEAEAKATAEATAKATAEAIAEALAEPEPGLPLLALLFSLPVLQHWIEKNWING</sequence>
<proteinExistence type="evidence at protein level"/>
<comment type="function">
    <text evidence="2">Toxin that potently modulates mammalian voltage-gated sodium (Nav) channels, reducing the voltage threshold for activation and inhibiting channel inactivation. Is selective for tetrodotoxin (TTX)- sensitive channels. Shows activity on hNav1.6/SCN8A (EC(50)=285 nM), mNav1.7/SCN9A (EC(50)=352 nM) and hNav1.7 (EC(50)=403 nM). In vivo, causes spontaneous, gradual and long-lasting nocifensive behaviors by intraplantar injection in mice, as well as noticeable swelling of the injected paw. Does not have effect on insects (blowflies).</text>
</comment>
<comment type="subcellular location">
    <subcellularLocation>
        <location evidence="2">Secreted</location>
    </subcellularLocation>
</comment>
<comment type="tissue specificity">
    <text evidence="5">Expressed by the venom gland.</text>
</comment>
<comment type="miscellaneous">
    <text evidence="2">Negative results: does not show activity at hNav1.8/SCN10A (EC(50)&gt;1 uM) and hNav1.9/SCN11A (EC(50)&gt;1 uM). Does not exhibit hemolytic and cytotoxic activities on HEK293 cells.</text>
</comment>
<comment type="similarity">
    <text evidence="4">Belongs to the formicidae venom clade 1 family.</text>
</comment>
<organism>
    <name type="scientific">Pogonomyrmex maricopa</name>
    <name type="common">Maricopa harvester ant</name>
    <dbReference type="NCBI Taxonomy" id="144040"/>
    <lineage>
        <taxon>Eukaryota</taxon>
        <taxon>Metazoa</taxon>
        <taxon>Ecdysozoa</taxon>
        <taxon>Arthropoda</taxon>
        <taxon>Hexapoda</taxon>
        <taxon>Insecta</taxon>
        <taxon>Pterygota</taxon>
        <taxon>Neoptera</taxon>
        <taxon>Endopterygota</taxon>
        <taxon>Hymenoptera</taxon>
        <taxon>Apocrita</taxon>
        <taxon>Aculeata</taxon>
        <taxon>Formicoidea</taxon>
        <taxon>Formicidae</taxon>
        <taxon>Myrmicinae</taxon>
        <taxon>Pogonomyrmex</taxon>
    </lineage>
</organism>
<reference key="1">
    <citation type="journal article" date="2024" name="J. Biol. Chem.">
        <title>Peptide toxins that target vertebrate voltage-gated sodium channels underly the painful stings of harvester ants.</title>
        <authorList>
            <person name="Robinson S.D."/>
            <person name="Deuis J.R."/>
            <person name="Niu P."/>
            <person name="Touchard A."/>
            <person name="Mueller A."/>
            <person name="Schendel V."/>
            <person name="Brinkwirth N."/>
            <person name="King G.F."/>
            <person name="Vetter I."/>
            <person name="Schmidt J.O."/>
        </authorList>
    </citation>
    <scope>NUCLEOTIDE SEQUENCE [MRNA]</scope>
    <scope>IDENTIFICATION BY MASS SPECTROMETRY</scope>
    <scope>SUBCELLULAR LOCATION</scope>
    <scope>SYNTHESIS OF 60-83</scope>
    <scope>BIOASSAY</scope>
    <scope>AMIDATION AT ASN-83</scope>
    <source>
        <tissue>Venom</tissue>
        <tissue>Venom gland</tissue>
    </source>
</reference>
<evidence type="ECO:0000255" key="1"/>
<evidence type="ECO:0000269" key="2">
    <source>
    </source>
</evidence>
<evidence type="ECO:0000303" key="3">
    <source>
    </source>
</evidence>
<evidence type="ECO:0000305" key="4"/>
<evidence type="ECO:0000305" key="5">
    <source>
    </source>
</evidence>
<feature type="signal peptide" evidence="1">
    <location>
        <begin position="1"/>
        <end position="22"/>
    </location>
</feature>
<feature type="propeptide" id="PRO_0000461233" evidence="4">
    <location>
        <begin position="23"/>
        <end position="59"/>
    </location>
</feature>
<feature type="peptide" id="PRO_0000461234" description="Myrmicitoxin(1)-Pm1a" evidence="2">
    <location>
        <begin position="60"/>
        <end position="83"/>
    </location>
</feature>
<feature type="modified residue" description="Asparagine amide" evidence="2">
    <location>
        <position position="83"/>
    </location>
</feature>